<evidence type="ECO:0000255" key="1">
    <source>
        <dbReference type="HAMAP-Rule" id="MF_01013"/>
    </source>
</evidence>
<reference key="1">
    <citation type="journal article" date="2002" name="Proc. Natl. Acad. Sci. U.S.A.">
        <title>The complete genome sequence of Chlorobium tepidum TLS, a photosynthetic, anaerobic, green-sulfur bacterium.</title>
        <authorList>
            <person name="Eisen J.A."/>
            <person name="Nelson K.E."/>
            <person name="Paulsen I.T."/>
            <person name="Heidelberg J.F."/>
            <person name="Wu M."/>
            <person name="Dodson R.J."/>
            <person name="DeBoy R.T."/>
            <person name="Gwinn M.L."/>
            <person name="Nelson W.C."/>
            <person name="Haft D.H."/>
            <person name="Hickey E.K."/>
            <person name="Peterson J.D."/>
            <person name="Durkin A.S."/>
            <person name="Kolonay J.F."/>
            <person name="Yang F."/>
            <person name="Holt I.E."/>
            <person name="Umayam L.A."/>
            <person name="Mason T.M."/>
            <person name="Brenner M."/>
            <person name="Shea T.P."/>
            <person name="Parksey D.S."/>
            <person name="Nierman W.C."/>
            <person name="Feldblyum T.V."/>
            <person name="Hansen C.L."/>
            <person name="Craven M.B."/>
            <person name="Radune D."/>
            <person name="Vamathevan J.J."/>
            <person name="Khouri H.M."/>
            <person name="White O."/>
            <person name="Gruber T.M."/>
            <person name="Ketchum K.A."/>
            <person name="Venter J.C."/>
            <person name="Tettelin H."/>
            <person name="Bryant D.A."/>
            <person name="Fraser C.M."/>
        </authorList>
    </citation>
    <scope>NUCLEOTIDE SEQUENCE [LARGE SCALE GENOMIC DNA]</scope>
    <source>
        <strain>ATCC 49652 / DSM 12025 / NBRC 103806 / TLS</strain>
    </source>
</reference>
<feature type="chain" id="PRO_0000142142" description="Imidazole glycerol phosphate synthase subunit HisF">
    <location>
        <begin position="1"/>
        <end position="251"/>
    </location>
</feature>
<feature type="active site" evidence="1">
    <location>
        <position position="11"/>
    </location>
</feature>
<feature type="active site" evidence="1">
    <location>
        <position position="130"/>
    </location>
</feature>
<protein>
    <recommendedName>
        <fullName evidence="1">Imidazole glycerol phosphate synthase subunit HisF</fullName>
        <ecNumber evidence="1">4.3.2.10</ecNumber>
    </recommendedName>
    <alternativeName>
        <fullName evidence="1">IGP synthase cyclase subunit</fullName>
    </alternativeName>
    <alternativeName>
        <fullName evidence="1">IGP synthase subunit HisF</fullName>
    </alternativeName>
    <alternativeName>
        <fullName evidence="1">ImGP synthase subunit HisF</fullName>
        <shortName evidence="1">IGPS subunit HisF</shortName>
    </alternativeName>
</protein>
<proteinExistence type="inferred from homology"/>
<keyword id="KW-0028">Amino-acid biosynthesis</keyword>
<keyword id="KW-0963">Cytoplasm</keyword>
<keyword id="KW-0368">Histidine biosynthesis</keyword>
<keyword id="KW-0456">Lyase</keyword>
<keyword id="KW-1185">Reference proteome</keyword>
<dbReference type="EC" id="4.3.2.10" evidence="1"/>
<dbReference type="EMBL" id="AE006470">
    <property type="protein sequence ID" value="AAM72741.1"/>
    <property type="molecule type" value="Genomic_DNA"/>
</dbReference>
<dbReference type="RefSeq" id="NP_662399.1">
    <property type="nucleotide sequence ID" value="NC_002932.3"/>
</dbReference>
<dbReference type="RefSeq" id="WP_010933180.1">
    <property type="nucleotide sequence ID" value="NC_002932.3"/>
</dbReference>
<dbReference type="SMR" id="Q8KCB0"/>
<dbReference type="STRING" id="194439.CT1514"/>
<dbReference type="EnsemblBacteria" id="AAM72741">
    <property type="protein sequence ID" value="AAM72741"/>
    <property type="gene ID" value="CT1514"/>
</dbReference>
<dbReference type="KEGG" id="cte:CT1514"/>
<dbReference type="PATRIC" id="fig|194439.7.peg.1374"/>
<dbReference type="eggNOG" id="COG0107">
    <property type="taxonomic scope" value="Bacteria"/>
</dbReference>
<dbReference type="HOGENOM" id="CLU_048577_4_0_10"/>
<dbReference type="OrthoDB" id="9781903at2"/>
<dbReference type="UniPathway" id="UPA00031">
    <property type="reaction ID" value="UER00010"/>
</dbReference>
<dbReference type="Proteomes" id="UP000001007">
    <property type="component" value="Chromosome"/>
</dbReference>
<dbReference type="GO" id="GO:0005737">
    <property type="term" value="C:cytoplasm"/>
    <property type="evidence" value="ECO:0007669"/>
    <property type="project" value="UniProtKB-SubCell"/>
</dbReference>
<dbReference type="GO" id="GO:0000107">
    <property type="term" value="F:imidazoleglycerol-phosphate synthase activity"/>
    <property type="evidence" value="ECO:0007669"/>
    <property type="project" value="UniProtKB-UniRule"/>
</dbReference>
<dbReference type="GO" id="GO:0016829">
    <property type="term" value="F:lyase activity"/>
    <property type="evidence" value="ECO:0007669"/>
    <property type="project" value="UniProtKB-KW"/>
</dbReference>
<dbReference type="GO" id="GO:0000105">
    <property type="term" value="P:L-histidine biosynthetic process"/>
    <property type="evidence" value="ECO:0007669"/>
    <property type="project" value="UniProtKB-UniRule"/>
</dbReference>
<dbReference type="CDD" id="cd04731">
    <property type="entry name" value="HisF"/>
    <property type="match status" value="1"/>
</dbReference>
<dbReference type="FunFam" id="3.20.20.70:FF:000006">
    <property type="entry name" value="Imidazole glycerol phosphate synthase subunit HisF"/>
    <property type="match status" value="1"/>
</dbReference>
<dbReference type="Gene3D" id="3.20.20.70">
    <property type="entry name" value="Aldolase class I"/>
    <property type="match status" value="1"/>
</dbReference>
<dbReference type="HAMAP" id="MF_01013">
    <property type="entry name" value="HisF"/>
    <property type="match status" value="1"/>
</dbReference>
<dbReference type="InterPro" id="IPR013785">
    <property type="entry name" value="Aldolase_TIM"/>
</dbReference>
<dbReference type="InterPro" id="IPR006062">
    <property type="entry name" value="His_biosynth"/>
</dbReference>
<dbReference type="InterPro" id="IPR004651">
    <property type="entry name" value="HisF"/>
</dbReference>
<dbReference type="InterPro" id="IPR050064">
    <property type="entry name" value="IGPS_HisA/HisF"/>
</dbReference>
<dbReference type="InterPro" id="IPR011060">
    <property type="entry name" value="RibuloseP-bd_barrel"/>
</dbReference>
<dbReference type="NCBIfam" id="TIGR00735">
    <property type="entry name" value="hisF"/>
    <property type="match status" value="1"/>
</dbReference>
<dbReference type="PANTHER" id="PTHR21235:SF2">
    <property type="entry name" value="IMIDAZOLE GLYCEROL PHOSPHATE SYNTHASE HISHF"/>
    <property type="match status" value="1"/>
</dbReference>
<dbReference type="PANTHER" id="PTHR21235">
    <property type="entry name" value="IMIDAZOLE GLYCEROL PHOSPHATE SYNTHASE SUBUNIT HISF/H IGP SYNTHASE SUBUNIT HISF/H"/>
    <property type="match status" value="1"/>
</dbReference>
<dbReference type="Pfam" id="PF00977">
    <property type="entry name" value="His_biosynth"/>
    <property type="match status" value="1"/>
</dbReference>
<dbReference type="SUPFAM" id="SSF51366">
    <property type="entry name" value="Ribulose-phoshate binding barrel"/>
    <property type="match status" value="1"/>
</dbReference>
<comment type="function">
    <text evidence="1">IGPS catalyzes the conversion of PRFAR and glutamine to IGP, AICAR and glutamate. The HisF subunit catalyzes the cyclization activity that produces IGP and AICAR from PRFAR using the ammonia provided by the HisH subunit.</text>
</comment>
<comment type="catalytic activity">
    <reaction evidence="1">
        <text>5-[(5-phospho-1-deoxy-D-ribulos-1-ylimino)methylamino]-1-(5-phospho-beta-D-ribosyl)imidazole-4-carboxamide + L-glutamine = D-erythro-1-(imidazol-4-yl)glycerol 3-phosphate + 5-amino-1-(5-phospho-beta-D-ribosyl)imidazole-4-carboxamide + L-glutamate + H(+)</text>
        <dbReference type="Rhea" id="RHEA:24793"/>
        <dbReference type="ChEBI" id="CHEBI:15378"/>
        <dbReference type="ChEBI" id="CHEBI:29985"/>
        <dbReference type="ChEBI" id="CHEBI:58278"/>
        <dbReference type="ChEBI" id="CHEBI:58359"/>
        <dbReference type="ChEBI" id="CHEBI:58475"/>
        <dbReference type="ChEBI" id="CHEBI:58525"/>
        <dbReference type="EC" id="4.3.2.10"/>
    </reaction>
</comment>
<comment type="pathway">
    <text evidence="1">Amino-acid biosynthesis; L-histidine biosynthesis; L-histidine from 5-phospho-alpha-D-ribose 1-diphosphate: step 5/9.</text>
</comment>
<comment type="subunit">
    <text evidence="1">Heterodimer of HisH and HisF.</text>
</comment>
<comment type="subcellular location">
    <subcellularLocation>
        <location evidence="1">Cytoplasm</location>
    </subcellularLocation>
</comment>
<comment type="similarity">
    <text evidence="1">Belongs to the HisA/HisF family.</text>
</comment>
<name>HIS6_CHLTE</name>
<accession>Q8KCB0</accession>
<sequence>MLAKRIIPCLDVRDGRVVKGINFEGLRDAGSILEQARFYNNEMADELVFLDISASLESRRTTLEEVLKVSGEVFIPLTVGGGISSVERAHDAFLHGADKVSVNTAAVSEPELISRIAEKFGSQAVVVAIDVKKVDGRYIVHTHSGKKPTEYEAVEWAHKVQELGAGEILLTSMDRDGTQEGYDNEILKMISTTVHIPVIASGGAGNLEHLYRGFTDGHADAALAASIFHFRTYSIRQAKEYLRERGITVRL</sequence>
<organism>
    <name type="scientific">Chlorobaculum tepidum (strain ATCC 49652 / DSM 12025 / NBRC 103806 / TLS)</name>
    <name type="common">Chlorobium tepidum</name>
    <dbReference type="NCBI Taxonomy" id="194439"/>
    <lineage>
        <taxon>Bacteria</taxon>
        <taxon>Pseudomonadati</taxon>
        <taxon>Chlorobiota</taxon>
        <taxon>Chlorobiia</taxon>
        <taxon>Chlorobiales</taxon>
        <taxon>Chlorobiaceae</taxon>
        <taxon>Chlorobaculum</taxon>
    </lineage>
</organism>
<gene>
    <name evidence="1" type="primary">hisF</name>
    <name type="ordered locus">CT1514</name>
</gene>